<keyword id="KW-0378">Hydrolase</keyword>
<keyword id="KW-0442">Lipid degradation</keyword>
<keyword id="KW-0443">Lipid metabolism</keyword>
<keyword id="KW-1185">Reference proteome</keyword>
<keyword id="KW-0964">Secreted</keyword>
<keyword id="KW-0732">Signal</keyword>
<dbReference type="EC" id="3.1.1.-"/>
<dbReference type="EMBL" id="AB008265">
    <property type="protein sequence ID" value="BAB10559.1"/>
    <property type="molecule type" value="Genomic_DNA"/>
</dbReference>
<dbReference type="EMBL" id="CP002688">
    <property type="protein sequence ID" value="AED97714.1"/>
    <property type="molecule type" value="Genomic_DNA"/>
</dbReference>
<dbReference type="RefSeq" id="NP_201122.1">
    <property type="nucleotide sequence ID" value="NM_125712.1"/>
</dbReference>
<dbReference type="SMR" id="Q9FMK6"/>
<dbReference type="FunCoup" id="Q9FMK6">
    <property type="interactions" value="95"/>
</dbReference>
<dbReference type="PaxDb" id="3702-AT5G63170.1"/>
<dbReference type="ProteomicsDB" id="247114"/>
<dbReference type="EnsemblPlants" id="AT5G63170.1">
    <property type="protein sequence ID" value="AT5G63170.1"/>
    <property type="gene ID" value="AT5G63170"/>
</dbReference>
<dbReference type="GeneID" id="836438"/>
<dbReference type="Gramene" id="AT5G63170.1">
    <property type="protein sequence ID" value="AT5G63170.1"/>
    <property type="gene ID" value="AT5G63170"/>
</dbReference>
<dbReference type="KEGG" id="ath:AT5G63170"/>
<dbReference type="Araport" id="AT5G63170"/>
<dbReference type="TAIR" id="AT5G63170"/>
<dbReference type="HOGENOM" id="CLU_015101_0_1_1"/>
<dbReference type="InParanoid" id="Q9FMK6"/>
<dbReference type="OMA" id="SIYVDMY"/>
<dbReference type="OrthoDB" id="1600564at2759"/>
<dbReference type="PhylomeDB" id="Q9FMK6"/>
<dbReference type="BioCyc" id="ARA:AT5G63170-MONOMER"/>
<dbReference type="PRO" id="PR:Q9FMK6"/>
<dbReference type="Proteomes" id="UP000006548">
    <property type="component" value="Chromosome 5"/>
</dbReference>
<dbReference type="ExpressionAtlas" id="Q9FMK6">
    <property type="expression patterns" value="baseline"/>
</dbReference>
<dbReference type="GO" id="GO:0005576">
    <property type="term" value="C:extracellular region"/>
    <property type="evidence" value="ECO:0007669"/>
    <property type="project" value="UniProtKB-SubCell"/>
</dbReference>
<dbReference type="GO" id="GO:0016298">
    <property type="term" value="F:lipase activity"/>
    <property type="evidence" value="ECO:0007669"/>
    <property type="project" value="InterPro"/>
</dbReference>
<dbReference type="GO" id="GO:0016042">
    <property type="term" value="P:lipid catabolic process"/>
    <property type="evidence" value="ECO:0007669"/>
    <property type="project" value="UniProtKB-KW"/>
</dbReference>
<dbReference type="CDD" id="cd01837">
    <property type="entry name" value="SGNH_plant_lipase_like"/>
    <property type="match status" value="1"/>
</dbReference>
<dbReference type="FunFam" id="3.40.50.1110:FF:000003">
    <property type="entry name" value="GDSL esterase/lipase APG"/>
    <property type="match status" value="1"/>
</dbReference>
<dbReference type="Gene3D" id="3.40.50.1110">
    <property type="entry name" value="SGNH hydrolase"/>
    <property type="match status" value="1"/>
</dbReference>
<dbReference type="InterPro" id="IPR001087">
    <property type="entry name" value="GDSL"/>
</dbReference>
<dbReference type="InterPro" id="IPR050592">
    <property type="entry name" value="GDSL_lipolytic_enzyme"/>
</dbReference>
<dbReference type="InterPro" id="IPR008265">
    <property type="entry name" value="Lipase_GDSL_AS"/>
</dbReference>
<dbReference type="InterPro" id="IPR036514">
    <property type="entry name" value="SGNH_hydro_sf"/>
</dbReference>
<dbReference type="InterPro" id="IPR035669">
    <property type="entry name" value="SGNH_plant_lipase-like"/>
</dbReference>
<dbReference type="PANTHER" id="PTHR45642:SF36">
    <property type="entry name" value="(RAPE) HYPOTHETICAL PROTEIN"/>
    <property type="match status" value="1"/>
</dbReference>
<dbReference type="PANTHER" id="PTHR45642">
    <property type="entry name" value="GDSL ESTERASE/LIPASE EXL3"/>
    <property type="match status" value="1"/>
</dbReference>
<dbReference type="Pfam" id="PF00657">
    <property type="entry name" value="Lipase_GDSL"/>
    <property type="match status" value="1"/>
</dbReference>
<dbReference type="SUPFAM" id="SSF52266">
    <property type="entry name" value="SGNH hydrolase"/>
    <property type="match status" value="1"/>
</dbReference>
<dbReference type="PROSITE" id="PS01098">
    <property type="entry name" value="LIPASE_GDSL_SER"/>
    <property type="match status" value="1"/>
</dbReference>
<protein>
    <recommendedName>
        <fullName>GDSL esterase/lipase At5g63170</fullName>
        <ecNumber>3.1.1.-</ecNumber>
    </recommendedName>
    <alternativeName>
        <fullName>Extracellular lipase At5g63170</fullName>
    </alternativeName>
</protein>
<reference key="1">
    <citation type="journal article" date="1997" name="DNA Res.">
        <title>Structural analysis of Arabidopsis thaliana chromosome 5. III. Sequence features of the regions of 1,191,918 bp covered by seventeen physically assigned P1 clones.</title>
        <authorList>
            <person name="Nakamura Y."/>
            <person name="Sato S."/>
            <person name="Kaneko T."/>
            <person name="Kotani H."/>
            <person name="Asamizu E."/>
            <person name="Miyajima N."/>
            <person name="Tabata S."/>
        </authorList>
    </citation>
    <scope>NUCLEOTIDE SEQUENCE [LARGE SCALE GENOMIC DNA]</scope>
    <source>
        <strain>cv. Columbia</strain>
    </source>
</reference>
<reference key="2">
    <citation type="journal article" date="2017" name="Plant J.">
        <title>Araport11: a complete reannotation of the Arabidopsis thaliana reference genome.</title>
        <authorList>
            <person name="Cheng C.Y."/>
            <person name="Krishnakumar V."/>
            <person name="Chan A.P."/>
            <person name="Thibaud-Nissen F."/>
            <person name="Schobel S."/>
            <person name="Town C.D."/>
        </authorList>
    </citation>
    <scope>GENOME REANNOTATION</scope>
    <source>
        <strain>cv. Columbia</strain>
    </source>
</reference>
<reference key="3">
    <citation type="journal article" date="2004" name="Prog. Lipid Res.">
        <title>GDSL family of serine esterases/lipases.</title>
        <authorList>
            <person name="Akoh C.C."/>
            <person name="Lee G.-C."/>
            <person name="Liaw Y.-C."/>
            <person name="Huang T.-H."/>
            <person name="Shaw J.-F."/>
        </authorList>
    </citation>
    <scope>REVIEW</scope>
</reference>
<reference key="4">
    <citation type="journal article" date="2008" name="Pak. J. Biol. Sci.">
        <title>Sequence analysis of GDSL lipase gene family in Arabidopsis thaliana.</title>
        <authorList>
            <person name="Ling H."/>
        </authorList>
    </citation>
    <scope>GENE FAMILY</scope>
</reference>
<gene>
    <name type="ordered locus">At5g63170</name>
    <name type="ORF">MDC12.14</name>
</gene>
<name>GDL89_ARATH</name>
<feature type="signal peptide" evidence="2">
    <location>
        <begin position="1"/>
        <end position="23"/>
    </location>
</feature>
<feature type="chain" id="PRO_0000367429" description="GDSL esterase/lipase At5g63170">
    <location>
        <begin position="24"/>
        <end position="338"/>
    </location>
</feature>
<feature type="active site" description="Nucleophile" evidence="1">
    <location>
        <position position="35"/>
    </location>
</feature>
<feature type="active site" evidence="1">
    <location>
        <position position="313"/>
    </location>
</feature>
<feature type="active site" evidence="1">
    <location>
        <position position="316"/>
    </location>
</feature>
<sequence length="338" mass="36913">MNSLVIQTTIVLVSVISVSIVHAGNIPAVIAFGDSILDTGNNNYLMTLTKVNFYPYGRDFVTRRATGRFGNGRIPTDLIAEGLGIKNIVPAYRSPFLEPNDILTGVSFASGGSGLDPMTARIQGVIWVPDQLNDFKAYIAKLNSITGDEEKTRSIISNAVFVISAGNNDIAITYFTNPIRNTRYTIFSYTDLMVSWTQSFIKELYNLGARKFAIMGTLPLGCLPGASNALGGLCLEPANAVARLFNRKLADEVNNLNSMLPGSRSIYVDMYNPLLELVKNPLRSGFISPTRPCCCAPAAPIPCLDASRYVFWDIAHPSEKAYQTIIPPIIQQIQQSFA</sequence>
<proteinExistence type="inferred from homology"/>
<accession>Q9FMK6</accession>
<comment type="subcellular location">
    <subcellularLocation>
        <location evidence="3">Secreted</location>
    </subcellularLocation>
</comment>
<comment type="similarity">
    <text evidence="3">Belongs to the 'GDSL' lipolytic enzyme family.</text>
</comment>
<evidence type="ECO:0000250" key="1"/>
<evidence type="ECO:0000255" key="2"/>
<evidence type="ECO:0000305" key="3"/>
<organism>
    <name type="scientific">Arabidopsis thaliana</name>
    <name type="common">Mouse-ear cress</name>
    <dbReference type="NCBI Taxonomy" id="3702"/>
    <lineage>
        <taxon>Eukaryota</taxon>
        <taxon>Viridiplantae</taxon>
        <taxon>Streptophyta</taxon>
        <taxon>Embryophyta</taxon>
        <taxon>Tracheophyta</taxon>
        <taxon>Spermatophyta</taxon>
        <taxon>Magnoliopsida</taxon>
        <taxon>eudicotyledons</taxon>
        <taxon>Gunneridae</taxon>
        <taxon>Pentapetalae</taxon>
        <taxon>rosids</taxon>
        <taxon>malvids</taxon>
        <taxon>Brassicales</taxon>
        <taxon>Brassicaceae</taxon>
        <taxon>Camelineae</taxon>
        <taxon>Arabidopsis</taxon>
    </lineage>
</organism>